<sequence length="307" mass="32635">MSKHVAVLLGGTSAEREVSLNSGKACADALEGEGYRVTRVDVGPDIASVLTALRPDAAFNALHGPDGEDGTIQGLLEILKIPYTHSGVLASALAMNKERAKTVMRAAGVDVPEGRIVNRREAARTHPLPPPYVVKPIAEGSSVGVIIVRDGRSHPPQILASEEWTFGEQVLAEPYIAGRELTCGVMGDKALGVIEVKAATGDWYDYDAKYAPGGSVHVLPAELKPNVYQRVQELSLTAHQALGCRGVSRADLRYDDTPGGTGLLVVLEVNTQPGMTQTSLVPEMAAHAGLSFGELVRWMVEDASLNR</sequence>
<evidence type="ECO:0000250" key="1"/>
<evidence type="ECO:0000255" key="2">
    <source>
        <dbReference type="HAMAP-Rule" id="MF_00047"/>
    </source>
</evidence>
<gene>
    <name evidence="2" type="primary">ddl</name>
    <name type="ordered locus">Mrad2831_2353</name>
</gene>
<protein>
    <recommendedName>
        <fullName evidence="2">D-alanine--D-alanine ligase</fullName>
        <ecNumber evidence="2">6.3.2.4</ecNumber>
    </recommendedName>
    <alternativeName>
        <fullName evidence="2">D-Ala-D-Ala ligase</fullName>
    </alternativeName>
    <alternativeName>
        <fullName evidence="2">D-alanylalanine synthetase</fullName>
    </alternativeName>
</protein>
<organism>
    <name type="scientific">Methylobacterium radiotolerans (strain ATCC 27329 / DSM 1819 / JCM 2831 / NBRC 15690 / NCIMB 10815 / 0-1)</name>
    <dbReference type="NCBI Taxonomy" id="426355"/>
    <lineage>
        <taxon>Bacteria</taxon>
        <taxon>Pseudomonadati</taxon>
        <taxon>Pseudomonadota</taxon>
        <taxon>Alphaproteobacteria</taxon>
        <taxon>Hyphomicrobiales</taxon>
        <taxon>Methylobacteriaceae</taxon>
        <taxon>Methylobacterium</taxon>
    </lineage>
</organism>
<reference key="1">
    <citation type="submission" date="2008-03" db="EMBL/GenBank/DDBJ databases">
        <title>Complete sequence of chromosome of Methylobacterium radiotolerans JCM 2831.</title>
        <authorList>
            <consortium name="US DOE Joint Genome Institute"/>
            <person name="Copeland A."/>
            <person name="Lucas S."/>
            <person name="Lapidus A."/>
            <person name="Glavina del Rio T."/>
            <person name="Dalin E."/>
            <person name="Tice H."/>
            <person name="Bruce D."/>
            <person name="Goodwin L."/>
            <person name="Pitluck S."/>
            <person name="Kiss H."/>
            <person name="Brettin T."/>
            <person name="Detter J.C."/>
            <person name="Han C."/>
            <person name="Kuske C.R."/>
            <person name="Schmutz J."/>
            <person name="Larimer F."/>
            <person name="Land M."/>
            <person name="Hauser L."/>
            <person name="Kyrpides N."/>
            <person name="Mikhailova N."/>
            <person name="Marx C.J."/>
            <person name="Richardson P."/>
        </authorList>
    </citation>
    <scope>NUCLEOTIDE SEQUENCE [LARGE SCALE GENOMIC DNA]</scope>
    <source>
        <strain>ATCC 27329 / DSM 1819 / JCM 2831 / NBRC 15690 / NCIMB 10815 / 0-1</strain>
    </source>
</reference>
<comment type="function">
    <text evidence="2">Cell wall formation.</text>
</comment>
<comment type="catalytic activity">
    <reaction evidence="2">
        <text>2 D-alanine + ATP = D-alanyl-D-alanine + ADP + phosphate + H(+)</text>
        <dbReference type="Rhea" id="RHEA:11224"/>
        <dbReference type="ChEBI" id="CHEBI:15378"/>
        <dbReference type="ChEBI" id="CHEBI:30616"/>
        <dbReference type="ChEBI" id="CHEBI:43474"/>
        <dbReference type="ChEBI" id="CHEBI:57416"/>
        <dbReference type="ChEBI" id="CHEBI:57822"/>
        <dbReference type="ChEBI" id="CHEBI:456216"/>
        <dbReference type="EC" id="6.3.2.4"/>
    </reaction>
</comment>
<comment type="cofactor">
    <cofactor evidence="1">
        <name>Mg(2+)</name>
        <dbReference type="ChEBI" id="CHEBI:18420"/>
    </cofactor>
    <cofactor evidence="1">
        <name>Mn(2+)</name>
        <dbReference type="ChEBI" id="CHEBI:29035"/>
    </cofactor>
    <text evidence="1">Binds 2 magnesium or manganese ions per subunit.</text>
</comment>
<comment type="pathway">
    <text evidence="2">Cell wall biogenesis; peptidoglycan biosynthesis.</text>
</comment>
<comment type="subcellular location">
    <subcellularLocation>
        <location evidence="2">Cytoplasm</location>
    </subcellularLocation>
</comment>
<comment type="similarity">
    <text evidence="2">Belongs to the D-alanine--D-alanine ligase family.</text>
</comment>
<keyword id="KW-0067">ATP-binding</keyword>
<keyword id="KW-0133">Cell shape</keyword>
<keyword id="KW-0961">Cell wall biogenesis/degradation</keyword>
<keyword id="KW-0963">Cytoplasm</keyword>
<keyword id="KW-0436">Ligase</keyword>
<keyword id="KW-0460">Magnesium</keyword>
<keyword id="KW-0464">Manganese</keyword>
<keyword id="KW-0479">Metal-binding</keyword>
<keyword id="KW-0547">Nucleotide-binding</keyword>
<keyword id="KW-0573">Peptidoglycan synthesis</keyword>
<name>DDL_METRJ</name>
<dbReference type="EC" id="6.3.2.4" evidence="2"/>
<dbReference type="EMBL" id="CP001001">
    <property type="protein sequence ID" value="ACB24348.1"/>
    <property type="molecule type" value="Genomic_DNA"/>
</dbReference>
<dbReference type="RefSeq" id="WP_012319321.1">
    <property type="nucleotide sequence ID" value="NC_010505.1"/>
</dbReference>
<dbReference type="SMR" id="B1LXZ1"/>
<dbReference type="STRING" id="426355.Mrad2831_2353"/>
<dbReference type="GeneID" id="6138385"/>
<dbReference type="KEGG" id="mrd:Mrad2831_2353"/>
<dbReference type="eggNOG" id="COG1181">
    <property type="taxonomic scope" value="Bacteria"/>
</dbReference>
<dbReference type="HOGENOM" id="CLU_039268_1_1_5"/>
<dbReference type="OrthoDB" id="9813261at2"/>
<dbReference type="UniPathway" id="UPA00219"/>
<dbReference type="Proteomes" id="UP000006589">
    <property type="component" value="Chromosome"/>
</dbReference>
<dbReference type="GO" id="GO:0005737">
    <property type="term" value="C:cytoplasm"/>
    <property type="evidence" value="ECO:0007669"/>
    <property type="project" value="UniProtKB-SubCell"/>
</dbReference>
<dbReference type="GO" id="GO:0005524">
    <property type="term" value="F:ATP binding"/>
    <property type="evidence" value="ECO:0007669"/>
    <property type="project" value="UniProtKB-KW"/>
</dbReference>
<dbReference type="GO" id="GO:0008716">
    <property type="term" value="F:D-alanine-D-alanine ligase activity"/>
    <property type="evidence" value="ECO:0007669"/>
    <property type="project" value="UniProtKB-UniRule"/>
</dbReference>
<dbReference type="GO" id="GO:0046872">
    <property type="term" value="F:metal ion binding"/>
    <property type="evidence" value="ECO:0007669"/>
    <property type="project" value="UniProtKB-KW"/>
</dbReference>
<dbReference type="GO" id="GO:0071555">
    <property type="term" value="P:cell wall organization"/>
    <property type="evidence" value="ECO:0007669"/>
    <property type="project" value="UniProtKB-KW"/>
</dbReference>
<dbReference type="GO" id="GO:0009252">
    <property type="term" value="P:peptidoglycan biosynthetic process"/>
    <property type="evidence" value="ECO:0007669"/>
    <property type="project" value="UniProtKB-UniRule"/>
</dbReference>
<dbReference type="GO" id="GO:0008360">
    <property type="term" value="P:regulation of cell shape"/>
    <property type="evidence" value="ECO:0007669"/>
    <property type="project" value="UniProtKB-KW"/>
</dbReference>
<dbReference type="Gene3D" id="3.40.50.20">
    <property type="match status" value="1"/>
</dbReference>
<dbReference type="Gene3D" id="3.30.1490.20">
    <property type="entry name" value="ATP-grasp fold, A domain"/>
    <property type="match status" value="1"/>
</dbReference>
<dbReference type="Gene3D" id="3.30.470.20">
    <property type="entry name" value="ATP-grasp fold, B domain"/>
    <property type="match status" value="1"/>
</dbReference>
<dbReference type="HAMAP" id="MF_00047">
    <property type="entry name" value="Dala_Dala_lig"/>
    <property type="match status" value="1"/>
</dbReference>
<dbReference type="InterPro" id="IPR011761">
    <property type="entry name" value="ATP-grasp"/>
</dbReference>
<dbReference type="InterPro" id="IPR013815">
    <property type="entry name" value="ATP_grasp_subdomain_1"/>
</dbReference>
<dbReference type="InterPro" id="IPR000291">
    <property type="entry name" value="D-Ala_lig_Van_CS"/>
</dbReference>
<dbReference type="InterPro" id="IPR005905">
    <property type="entry name" value="D_ala_D_ala"/>
</dbReference>
<dbReference type="InterPro" id="IPR011095">
    <property type="entry name" value="Dala_Dala_lig_C"/>
</dbReference>
<dbReference type="InterPro" id="IPR011127">
    <property type="entry name" value="Dala_Dala_lig_N"/>
</dbReference>
<dbReference type="InterPro" id="IPR016185">
    <property type="entry name" value="PreATP-grasp_dom_sf"/>
</dbReference>
<dbReference type="NCBIfam" id="TIGR01205">
    <property type="entry name" value="D_ala_D_alaTIGR"/>
    <property type="match status" value="1"/>
</dbReference>
<dbReference type="NCBIfam" id="NF002378">
    <property type="entry name" value="PRK01372.1"/>
    <property type="match status" value="1"/>
</dbReference>
<dbReference type="PANTHER" id="PTHR23132">
    <property type="entry name" value="D-ALANINE--D-ALANINE LIGASE"/>
    <property type="match status" value="1"/>
</dbReference>
<dbReference type="PANTHER" id="PTHR23132:SF23">
    <property type="entry name" value="D-ALANINE--D-ALANINE LIGASE B"/>
    <property type="match status" value="1"/>
</dbReference>
<dbReference type="Pfam" id="PF07478">
    <property type="entry name" value="Dala_Dala_lig_C"/>
    <property type="match status" value="1"/>
</dbReference>
<dbReference type="Pfam" id="PF01820">
    <property type="entry name" value="Dala_Dala_lig_N"/>
    <property type="match status" value="1"/>
</dbReference>
<dbReference type="PIRSF" id="PIRSF039102">
    <property type="entry name" value="Ddl/VanB"/>
    <property type="match status" value="1"/>
</dbReference>
<dbReference type="SUPFAM" id="SSF56059">
    <property type="entry name" value="Glutathione synthetase ATP-binding domain-like"/>
    <property type="match status" value="1"/>
</dbReference>
<dbReference type="SUPFAM" id="SSF52440">
    <property type="entry name" value="PreATP-grasp domain"/>
    <property type="match status" value="1"/>
</dbReference>
<dbReference type="PROSITE" id="PS50975">
    <property type="entry name" value="ATP_GRASP"/>
    <property type="match status" value="1"/>
</dbReference>
<dbReference type="PROSITE" id="PS00843">
    <property type="entry name" value="DALA_DALA_LIGASE_1"/>
    <property type="match status" value="1"/>
</dbReference>
<dbReference type="PROSITE" id="PS00844">
    <property type="entry name" value="DALA_DALA_LIGASE_2"/>
    <property type="match status" value="1"/>
</dbReference>
<proteinExistence type="inferred from homology"/>
<feature type="chain" id="PRO_0000341132" description="D-alanine--D-alanine ligase">
    <location>
        <begin position="1"/>
        <end position="307"/>
    </location>
</feature>
<feature type="domain" description="ATP-grasp" evidence="2">
    <location>
        <begin position="101"/>
        <end position="301"/>
    </location>
</feature>
<feature type="binding site" evidence="2">
    <location>
        <begin position="127"/>
        <end position="182"/>
    </location>
    <ligand>
        <name>ATP</name>
        <dbReference type="ChEBI" id="CHEBI:30616"/>
    </ligand>
</feature>
<feature type="binding site" evidence="2">
    <location>
        <position position="251"/>
    </location>
    <ligand>
        <name>Mg(2+)</name>
        <dbReference type="ChEBI" id="CHEBI:18420"/>
        <label>1</label>
    </ligand>
</feature>
<feature type="binding site" evidence="2">
    <location>
        <position position="268"/>
    </location>
    <ligand>
        <name>Mg(2+)</name>
        <dbReference type="ChEBI" id="CHEBI:18420"/>
        <label>1</label>
    </ligand>
</feature>
<feature type="binding site" evidence="2">
    <location>
        <position position="268"/>
    </location>
    <ligand>
        <name>Mg(2+)</name>
        <dbReference type="ChEBI" id="CHEBI:18420"/>
        <label>2</label>
    </ligand>
</feature>
<feature type="binding site" evidence="2">
    <location>
        <position position="270"/>
    </location>
    <ligand>
        <name>Mg(2+)</name>
        <dbReference type="ChEBI" id="CHEBI:18420"/>
        <label>2</label>
    </ligand>
</feature>
<accession>B1LXZ1</accession>